<feature type="chain" id="PRO_1000192379" description="ATP-dependent 6-phosphofructokinase">
    <location>
        <begin position="1"/>
        <end position="322"/>
    </location>
</feature>
<feature type="active site" description="Proton acceptor" evidence="1">
    <location>
        <position position="129"/>
    </location>
</feature>
<feature type="binding site" evidence="1">
    <location>
        <position position="11"/>
    </location>
    <ligand>
        <name>ATP</name>
        <dbReference type="ChEBI" id="CHEBI:30616"/>
    </ligand>
</feature>
<feature type="binding site" evidence="1">
    <location>
        <begin position="21"/>
        <end position="25"/>
    </location>
    <ligand>
        <name>ADP</name>
        <dbReference type="ChEBI" id="CHEBI:456216"/>
        <note>allosteric activator; ligand shared between dimeric partners</note>
    </ligand>
</feature>
<feature type="binding site" evidence="1">
    <location>
        <begin position="72"/>
        <end position="73"/>
    </location>
    <ligand>
        <name>ATP</name>
        <dbReference type="ChEBI" id="CHEBI:30616"/>
    </ligand>
</feature>
<feature type="binding site" evidence="1">
    <location>
        <begin position="102"/>
        <end position="105"/>
    </location>
    <ligand>
        <name>ATP</name>
        <dbReference type="ChEBI" id="CHEBI:30616"/>
    </ligand>
</feature>
<feature type="binding site" evidence="1">
    <location>
        <position position="103"/>
    </location>
    <ligand>
        <name>Mg(2+)</name>
        <dbReference type="ChEBI" id="CHEBI:18420"/>
        <note>catalytic</note>
    </ligand>
</feature>
<feature type="binding site" description="in other chain" evidence="1">
    <location>
        <begin position="127"/>
        <end position="129"/>
    </location>
    <ligand>
        <name>substrate</name>
        <note>ligand shared between dimeric partners</note>
    </ligand>
</feature>
<feature type="binding site" description="in other chain" evidence="1">
    <location>
        <position position="156"/>
    </location>
    <ligand>
        <name>ADP</name>
        <dbReference type="ChEBI" id="CHEBI:456216"/>
        <note>allosteric activator; ligand shared between dimeric partners</note>
    </ligand>
</feature>
<feature type="binding site" evidence="1">
    <location>
        <position position="164"/>
    </location>
    <ligand>
        <name>substrate</name>
        <note>ligand shared between dimeric partners</note>
    </ligand>
</feature>
<feature type="binding site" description="in other chain" evidence="1">
    <location>
        <begin position="171"/>
        <end position="173"/>
    </location>
    <ligand>
        <name>substrate</name>
        <note>ligand shared between dimeric partners</note>
    </ligand>
</feature>
<feature type="binding site" description="in other chain" evidence="1">
    <location>
        <begin position="187"/>
        <end position="189"/>
    </location>
    <ligand>
        <name>ADP</name>
        <dbReference type="ChEBI" id="CHEBI:456216"/>
        <note>allosteric activator; ligand shared between dimeric partners</note>
    </ligand>
</feature>
<feature type="binding site" description="in other chain" evidence="1">
    <location>
        <position position="213"/>
    </location>
    <ligand>
        <name>ADP</name>
        <dbReference type="ChEBI" id="CHEBI:456216"/>
        <note>allosteric activator; ligand shared between dimeric partners</note>
    </ligand>
</feature>
<feature type="binding site" description="in other chain" evidence="1">
    <location>
        <begin position="215"/>
        <end position="217"/>
    </location>
    <ligand>
        <name>ADP</name>
        <dbReference type="ChEBI" id="CHEBI:456216"/>
        <note>allosteric activator; ligand shared between dimeric partners</note>
    </ligand>
</feature>
<feature type="binding site" description="in other chain" evidence="1">
    <location>
        <position position="224"/>
    </location>
    <ligand>
        <name>substrate</name>
        <note>ligand shared between dimeric partners</note>
    </ligand>
</feature>
<feature type="binding site" evidence="1">
    <location>
        <position position="245"/>
    </location>
    <ligand>
        <name>substrate</name>
        <note>ligand shared between dimeric partners</note>
    </ligand>
</feature>
<feature type="binding site" description="in other chain" evidence="1">
    <location>
        <begin position="251"/>
        <end position="254"/>
    </location>
    <ligand>
        <name>substrate</name>
        <note>ligand shared between dimeric partners</note>
    </ligand>
</feature>
<sequence length="322" mass="34567">MKKIAVLTSGGDAPGMNAAIRAVVRTAIYNGIEVYGVYQGYLGLINDDLKKLELGSVGDTIQRGGTFLYSARCPEFKDKEVRAKAIENLRSRGIDGLVVIGGDGSYRGAQRISEECPEIQTIGIPGTIDNDIPGTDYTIGFDSALNTIIESVDKIRDTASSHARTFIVEVMGRDCGDLALWAGLAVGAETIIVPEEKVDIKDVAEKIESGIKRGKKHSIVVVAEGVMGGQLCADELAKYIHVDARVSVLGHIQRGGSPTGQDRVLASRLGGHAVELLMDGKTALGVGIKQNQLTQTKFEDIFNNKGSKFDKQMYKLAQELSI</sequence>
<organism>
    <name type="scientific">Staphylococcus carnosus (strain TM300)</name>
    <dbReference type="NCBI Taxonomy" id="396513"/>
    <lineage>
        <taxon>Bacteria</taxon>
        <taxon>Bacillati</taxon>
        <taxon>Bacillota</taxon>
        <taxon>Bacilli</taxon>
        <taxon>Bacillales</taxon>
        <taxon>Staphylococcaceae</taxon>
        <taxon>Staphylococcus</taxon>
    </lineage>
</organism>
<dbReference type="EC" id="2.7.1.11" evidence="1"/>
<dbReference type="EMBL" id="AM295250">
    <property type="protein sequence ID" value="CAL28209.1"/>
    <property type="molecule type" value="Genomic_DNA"/>
</dbReference>
<dbReference type="RefSeq" id="WP_015900549.1">
    <property type="nucleotide sequence ID" value="NC_012121.1"/>
</dbReference>
<dbReference type="SMR" id="B9DN94"/>
<dbReference type="GeneID" id="93793726"/>
<dbReference type="KEGG" id="sca:SCA_1304"/>
<dbReference type="eggNOG" id="COG0205">
    <property type="taxonomic scope" value="Bacteria"/>
</dbReference>
<dbReference type="HOGENOM" id="CLU_020655_0_1_9"/>
<dbReference type="OrthoDB" id="9802503at2"/>
<dbReference type="BioCyc" id="SCAR396513:SCA_RS06495-MONOMER"/>
<dbReference type="UniPathway" id="UPA00109">
    <property type="reaction ID" value="UER00182"/>
</dbReference>
<dbReference type="Proteomes" id="UP000000444">
    <property type="component" value="Chromosome"/>
</dbReference>
<dbReference type="GO" id="GO:0005945">
    <property type="term" value="C:6-phosphofructokinase complex"/>
    <property type="evidence" value="ECO:0007669"/>
    <property type="project" value="TreeGrafter"/>
</dbReference>
<dbReference type="GO" id="GO:0003872">
    <property type="term" value="F:6-phosphofructokinase activity"/>
    <property type="evidence" value="ECO:0007669"/>
    <property type="project" value="UniProtKB-UniRule"/>
</dbReference>
<dbReference type="GO" id="GO:0016208">
    <property type="term" value="F:AMP binding"/>
    <property type="evidence" value="ECO:0007669"/>
    <property type="project" value="TreeGrafter"/>
</dbReference>
<dbReference type="GO" id="GO:0005524">
    <property type="term" value="F:ATP binding"/>
    <property type="evidence" value="ECO:0007669"/>
    <property type="project" value="UniProtKB-KW"/>
</dbReference>
<dbReference type="GO" id="GO:0070095">
    <property type="term" value="F:fructose-6-phosphate binding"/>
    <property type="evidence" value="ECO:0007669"/>
    <property type="project" value="TreeGrafter"/>
</dbReference>
<dbReference type="GO" id="GO:0042802">
    <property type="term" value="F:identical protein binding"/>
    <property type="evidence" value="ECO:0007669"/>
    <property type="project" value="TreeGrafter"/>
</dbReference>
<dbReference type="GO" id="GO:0046872">
    <property type="term" value="F:metal ion binding"/>
    <property type="evidence" value="ECO:0007669"/>
    <property type="project" value="UniProtKB-KW"/>
</dbReference>
<dbReference type="GO" id="GO:0048029">
    <property type="term" value="F:monosaccharide binding"/>
    <property type="evidence" value="ECO:0007669"/>
    <property type="project" value="TreeGrafter"/>
</dbReference>
<dbReference type="GO" id="GO:0061621">
    <property type="term" value="P:canonical glycolysis"/>
    <property type="evidence" value="ECO:0007669"/>
    <property type="project" value="TreeGrafter"/>
</dbReference>
<dbReference type="GO" id="GO:0030388">
    <property type="term" value="P:fructose 1,6-bisphosphate metabolic process"/>
    <property type="evidence" value="ECO:0007669"/>
    <property type="project" value="TreeGrafter"/>
</dbReference>
<dbReference type="GO" id="GO:0006002">
    <property type="term" value="P:fructose 6-phosphate metabolic process"/>
    <property type="evidence" value="ECO:0007669"/>
    <property type="project" value="InterPro"/>
</dbReference>
<dbReference type="FunFam" id="3.40.50.450:FF:000001">
    <property type="entry name" value="ATP-dependent 6-phosphofructokinase"/>
    <property type="match status" value="1"/>
</dbReference>
<dbReference type="FunFam" id="3.40.50.460:FF:000002">
    <property type="entry name" value="ATP-dependent 6-phosphofructokinase"/>
    <property type="match status" value="1"/>
</dbReference>
<dbReference type="Gene3D" id="3.40.50.450">
    <property type="match status" value="1"/>
</dbReference>
<dbReference type="Gene3D" id="3.40.50.460">
    <property type="entry name" value="Phosphofructokinase domain"/>
    <property type="match status" value="1"/>
</dbReference>
<dbReference type="HAMAP" id="MF_00339">
    <property type="entry name" value="Phosphofructokinase_I_B1"/>
    <property type="match status" value="1"/>
</dbReference>
<dbReference type="InterPro" id="IPR022953">
    <property type="entry name" value="ATP_PFK"/>
</dbReference>
<dbReference type="InterPro" id="IPR012003">
    <property type="entry name" value="ATP_PFK_prok-type"/>
</dbReference>
<dbReference type="InterPro" id="IPR012828">
    <property type="entry name" value="PFKA_ATP_prok"/>
</dbReference>
<dbReference type="InterPro" id="IPR015912">
    <property type="entry name" value="Phosphofructokinase_CS"/>
</dbReference>
<dbReference type="InterPro" id="IPR000023">
    <property type="entry name" value="Phosphofructokinase_dom"/>
</dbReference>
<dbReference type="InterPro" id="IPR035966">
    <property type="entry name" value="PKF_sf"/>
</dbReference>
<dbReference type="NCBIfam" id="TIGR02482">
    <property type="entry name" value="PFKA_ATP"/>
    <property type="match status" value="1"/>
</dbReference>
<dbReference type="NCBIfam" id="NF002872">
    <property type="entry name" value="PRK03202.1"/>
    <property type="match status" value="1"/>
</dbReference>
<dbReference type="PANTHER" id="PTHR13697:SF4">
    <property type="entry name" value="ATP-DEPENDENT 6-PHOSPHOFRUCTOKINASE"/>
    <property type="match status" value="1"/>
</dbReference>
<dbReference type="PANTHER" id="PTHR13697">
    <property type="entry name" value="PHOSPHOFRUCTOKINASE"/>
    <property type="match status" value="1"/>
</dbReference>
<dbReference type="Pfam" id="PF00365">
    <property type="entry name" value="PFK"/>
    <property type="match status" value="1"/>
</dbReference>
<dbReference type="PIRSF" id="PIRSF000532">
    <property type="entry name" value="ATP_PFK_prok"/>
    <property type="match status" value="1"/>
</dbReference>
<dbReference type="PRINTS" id="PR00476">
    <property type="entry name" value="PHFRCTKINASE"/>
</dbReference>
<dbReference type="SUPFAM" id="SSF53784">
    <property type="entry name" value="Phosphofructokinase"/>
    <property type="match status" value="1"/>
</dbReference>
<dbReference type="PROSITE" id="PS00433">
    <property type="entry name" value="PHOSPHOFRUCTOKINASE"/>
    <property type="match status" value="1"/>
</dbReference>
<reference key="1">
    <citation type="journal article" date="2009" name="Appl. Environ. Microbiol.">
        <title>Genome analysis of the meat starter culture bacterium Staphylococcus carnosus TM300.</title>
        <authorList>
            <person name="Rosenstein R."/>
            <person name="Nerz C."/>
            <person name="Biswas L."/>
            <person name="Resch A."/>
            <person name="Raddatz G."/>
            <person name="Schuster S.C."/>
            <person name="Goetz F."/>
        </authorList>
    </citation>
    <scope>NUCLEOTIDE SEQUENCE [LARGE SCALE GENOMIC DNA]</scope>
    <source>
        <strain>TM300</strain>
    </source>
</reference>
<accession>B9DN94</accession>
<evidence type="ECO:0000255" key="1">
    <source>
        <dbReference type="HAMAP-Rule" id="MF_00339"/>
    </source>
</evidence>
<comment type="function">
    <text evidence="1">Catalyzes the phosphorylation of D-fructose 6-phosphate to fructose 1,6-bisphosphate by ATP, the first committing step of glycolysis.</text>
</comment>
<comment type="catalytic activity">
    <reaction evidence="1">
        <text>beta-D-fructose 6-phosphate + ATP = beta-D-fructose 1,6-bisphosphate + ADP + H(+)</text>
        <dbReference type="Rhea" id="RHEA:16109"/>
        <dbReference type="ChEBI" id="CHEBI:15378"/>
        <dbReference type="ChEBI" id="CHEBI:30616"/>
        <dbReference type="ChEBI" id="CHEBI:32966"/>
        <dbReference type="ChEBI" id="CHEBI:57634"/>
        <dbReference type="ChEBI" id="CHEBI:456216"/>
        <dbReference type="EC" id="2.7.1.11"/>
    </reaction>
</comment>
<comment type="cofactor">
    <cofactor evidence="1">
        <name>Mg(2+)</name>
        <dbReference type="ChEBI" id="CHEBI:18420"/>
    </cofactor>
</comment>
<comment type="activity regulation">
    <text evidence="1">Allosterically activated by ADP and other diphosphonucleosides, and allosterically inhibited by phosphoenolpyruvate.</text>
</comment>
<comment type="pathway">
    <text evidence="1">Carbohydrate degradation; glycolysis; D-glyceraldehyde 3-phosphate and glycerone phosphate from D-glucose: step 3/4.</text>
</comment>
<comment type="subunit">
    <text evidence="1">Homotetramer.</text>
</comment>
<comment type="subcellular location">
    <subcellularLocation>
        <location evidence="1">Cytoplasm</location>
    </subcellularLocation>
</comment>
<comment type="similarity">
    <text evidence="1">Belongs to the phosphofructokinase type A (PFKA) family. ATP-dependent PFK group I subfamily. Prokaryotic clade 'B1' sub-subfamily.</text>
</comment>
<protein>
    <recommendedName>
        <fullName evidence="1">ATP-dependent 6-phosphofructokinase</fullName>
        <shortName evidence="1">ATP-PFK</shortName>
        <shortName evidence="1">Phosphofructokinase</shortName>
        <ecNumber evidence="1">2.7.1.11</ecNumber>
    </recommendedName>
    <alternativeName>
        <fullName evidence="1">Phosphohexokinase</fullName>
    </alternativeName>
</protein>
<keyword id="KW-0021">Allosteric enzyme</keyword>
<keyword id="KW-0067">ATP-binding</keyword>
<keyword id="KW-0963">Cytoplasm</keyword>
<keyword id="KW-0324">Glycolysis</keyword>
<keyword id="KW-0418">Kinase</keyword>
<keyword id="KW-0460">Magnesium</keyword>
<keyword id="KW-0479">Metal-binding</keyword>
<keyword id="KW-0547">Nucleotide-binding</keyword>
<keyword id="KW-1185">Reference proteome</keyword>
<keyword id="KW-0808">Transferase</keyword>
<gene>
    <name evidence="1" type="primary">pfkA</name>
    <name type="ordered locus">Sca_1304</name>
</gene>
<proteinExistence type="inferred from homology"/>
<name>PFKA_STACT</name>